<proteinExistence type="evidence at protein level"/>
<sequence>MKIAVIGQSLFGQEVYCQLRKEGHEVVGVFTIPDKDGKADPLGLEAEKDGVPVFKFPRWRARGQALPEVVAKYQALGAELNVLPFCSQFIPMEVINAPRHGSIIYHPSLLPRHRGASAINWTLIHGDKKGGFTIFWADDGLDTGDLLLQKECDVLPDDTVSTLYNRFLFPEGIKGMVQAVRLIAEGTAPRRPQPEEGATYEGIQKKETAMINWDQPAEAIHNWIRGNDKVPGAWTEACGQKLTFFNSTLNTSGLVAQGEALPIPGAHRPGLVTKAGLILFGNDDRMLLVKNIQLEDGKMMPASQFFKGSASSALELTEEELATAEAVRSSWMRILPNVPEVEDSTDFFKSGAASVDVVRLVEEVKELCDGLELENEDVYMATTFGDFIQLLVRKLRGEDGESECVINYVEKAVKKLTLQMPYQLFIGGEFVDAEGAKTYSTINPTDGSVICQVSLAQVSDVDKAVAAAKEAFENGLWGKINARDRGRLLYRLADLMEQHQEELATIEALDAGAVYTLALKTHVGMSIQTFRYFAGWCDKIQGATIPINQARPNRNLTLTKKEPVGVCGIVIPWNYPLMMLSWKTAACLAAGNTVVIKPAQVTPLTALKFAELTLKAGIPKGVVNILPGSGSLVGQRLSDHPDVRKIGFTGSTEVGKHIMKSCALSNVKKVSLELGGKSPLIIFADCDLNKAVQMGMSSVFFNKGENCIAAGRLFVEDSIHDQFVQKVVEEVGKMKIGNPLDRDTNHGPQNHEAHLRKLVEYCQRGVKEGATLVCGGNQVPRPGFFFQPTVFTDVEDHMYIAKEESFGPIMIISRFADGDVDAVLSRANATEFGLASGVFTRDINKALYVSDKLQAGTVFVNTYNKTDVAAPFGGFKQSGFGKDLGEAALNEYLRIKTVTFEY</sequence>
<organism>
    <name type="scientific">Mus musculus</name>
    <name type="common">Mouse</name>
    <dbReference type="NCBI Taxonomy" id="10090"/>
    <lineage>
        <taxon>Eukaryota</taxon>
        <taxon>Metazoa</taxon>
        <taxon>Chordata</taxon>
        <taxon>Craniata</taxon>
        <taxon>Vertebrata</taxon>
        <taxon>Euteleostomi</taxon>
        <taxon>Mammalia</taxon>
        <taxon>Eutheria</taxon>
        <taxon>Euarchontoglires</taxon>
        <taxon>Glires</taxon>
        <taxon>Rodentia</taxon>
        <taxon>Myomorpha</taxon>
        <taxon>Muroidea</taxon>
        <taxon>Muridae</taxon>
        <taxon>Murinae</taxon>
        <taxon>Mus</taxon>
        <taxon>Mus</taxon>
    </lineage>
</organism>
<evidence type="ECO:0000250" key="1">
    <source>
        <dbReference type="UniProtKB" id="O75891"/>
    </source>
</evidence>
<evidence type="ECO:0000250" key="2">
    <source>
        <dbReference type="UniProtKB" id="P28037"/>
    </source>
</evidence>
<evidence type="ECO:0000250" key="3">
    <source>
        <dbReference type="UniProtKB" id="Q3SY69"/>
    </source>
</evidence>
<evidence type="ECO:0000250" key="4">
    <source>
        <dbReference type="UniProtKB" id="Q8K009"/>
    </source>
</evidence>
<evidence type="ECO:0000255" key="5">
    <source>
        <dbReference type="PROSITE-ProRule" id="PRU00258"/>
    </source>
</evidence>
<evidence type="ECO:0000269" key="6">
    <source>
    </source>
</evidence>
<evidence type="ECO:0000303" key="7">
    <source>
    </source>
</evidence>
<evidence type="ECO:0000305" key="8"/>
<evidence type="ECO:0000305" key="9">
    <source>
    </source>
</evidence>
<evidence type="ECO:0000312" key="10">
    <source>
        <dbReference type="MGI" id="MGI:1340024"/>
    </source>
</evidence>
<evidence type="ECO:0007744" key="11">
    <source>
    </source>
</evidence>
<feature type="chain" id="PRO_0000199420" description="Cytosolic 10-formyltetrahydrofolate dehydrogenase">
    <location>
        <begin position="1"/>
        <end position="902"/>
    </location>
</feature>
<feature type="domain" description="Carrier" evidence="5">
    <location>
        <begin position="318"/>
        <end position="395"/>
    </location>
</feature>
<feature type="region of interest" description="Hydrolase domain" evidence="2">
    <location>
        <begin position="1"/>
        <end position="310"/>
    </location>
</feature>
<feature type="region of interest" description="Aldehyde dehydrogenase domain" evidence="2">
    <location>
        <begin position="417"/>
        <end position="902"/>
    </location>
</feature>
<feature type="active site" description="Proton donor" evidence="2">
    <location>
        <position position="106"/>
    </location>
</feature>
<feature type="active site" description="Proton acceptor" evidence="2">
    <location>
        <position position="673"/>
    </location>
</feature>
<feature type="active site" description="Proton donor" evidence="2">
    <location>
        <position position="707"/>
    </location>
</feature>
<feature type="binding site" evidence="1">
    <location>
        <begin position="88"/>
        <end position="90"/>
    </location>
    <ligand>
        <name>(6R)-10-formyltetrahydrofolate</name>
        <dbReference type="ChEBI" id="CHEBI:195366"/>
    </ligand>
</feature>
<feature type="binding site" evidence="1">
    <location>
        <position position="142"/>
    </location>
    <ligand>
        <name>(6R)-10-formyltetrahydrofolate</name>
        <dbReference type="ChEBI" id="CHEBI:195366"/>
    </ligand>
</feature>
<feature type="binding site" evidence="2">
    <location>
        <begin position="571"/>
        <end position="573"/>
    </location>
    <ligand>
        <name>NADP(+)</name>
        <dbReference type="ChEBI" id="CHEBI:58349"/>
    </ligand>
</feature>
<feature type="binding site" evidence="2">
    <location>
        <begin position="597"/>
        <end position="600"/>
    </location>
    <ligand>
        <name>NADP(+)</name>
        <dbReference type="ChEBI" id="CHEBI:58349"/>
    </ligand>
</feature>
<feature type="binding site" evidence="2">
    <location>
        <begin position="630"/>
        <end position="635"/>
    </location>
    <ligand>
        <name>NADP(+)</name>
        <dbReference type="ChEBI" id="CHEBI:58349"/>
    </ligand>
</feature>
<feature type="binding site" evidence="2">
    <location>
        <begin position="650"/>
        <end position="651"/>
    </location>
    <ligand>
        <name>NADP(+)</name>
        <dbReference type="ChEBI" id="CHEBI:58349"/>
    </ligand>
</feature>
<feature type="binding site" evidence="2">
    <location>
        <begin position="673"/>
        <end position="674"/>
    </location>
    <ligand>
        <name>NADP(+)</name>
        <dbReference type="ChEBI" id="CHEBI:58349"/>
    </ligand>
</feature>
<feature type="binding site" evidence="2">
    <location>
        <position position="757"/>
    </location>
    <ligand>
        <name>NADP(+)</name>
        <dbReference type="ChEBI" id="CHEBI:58349"/>
    </ligand>
</feature>
<feature type="binding site" evidence="2">
    <location>
        <begin position="804"/>
        <end position="806"/>
    </location>
    <ligand>
        <name>NADP(+)</name>
        <dbReference type="ChEBI" id="CHEBI:58349"/>
    </ligand>
</feature>
<feature type="site" description="Essential for catalytic activity" evidence="2">
    <location>
        <position position="142"/>
    </location>
</feature>
<feature type="modified residue" description="Phosphoserine" evidence="1">
    <location>
        <position position="9"/>
    </location>
</feature>
<feature type="modified residue" description="N6-succinyllysine" evidence="11">
    <location>
        <position position="38"/>
    </location>
</feature>
<feature type="modified residue" description="O-(pantetheine 4'-phosphoryl)serine" evidence="2 5">
    <location>
        <position position="354"/>
    </location>
</feature>
<feature type="modified residue" description="Phosphoserine" evidence="1">
    <location>
        <position position="629"/>
    </location>
</feature>
<feature type="modified residue" description="Phosphoserine" evidence="1">
    <location>
        <position position="631"/>
    </location>
</feature>
<feature type="modified residue" description="N6-succinyllysine" evidence="4">
    <location>
        <position position="660"/>
    </location>
</feature>
<feature type="modified residue" description="N6-succinyllysine" evidence="11">
    <location>
        <position position="767"/>
    </location>
</feature>
<feature type="modified residue" description="Phosphoserine" evidence="1">
    <location>
        <position position="825"/>
    </location>
</feature>
<feature type="modified residue" description="N6-acetyllysine" evidence="3">
    <location>
        <position position="882"/>
    </location>
</feature>
<comment type="function">
    <text evidence="2 6">Cytosolic 10-formyltetrahydrofolate dehydrogenase that catalyzes the NADP(+)-dependent conversion of 10-formyltetrahydrofolate to tetrahydrofolate and carbon dioxide (PubMed:31624291). May also have an NADP(+)-dependent aldehyde dehydrogenase activity towards formaldehyde, acetaldehyde, propionaldehyde, and benzaldehyde (By similarity).</text>
</comment>
<comment type="catalytic activity">
    <reaction evidence="6">
        <text>(6R)-10-formyltetrahydrofolate + NADP(+) + H2O = (6S)-5,6,7,8-tetrahydrofolate + CO2 + NADPH + H(+)</text>
        <dbReference type="Rhea" id="RHEA:10180"/>
        <dbReference type="ChEBI" id="CHEBI:15377"/>
        <dbReference type="ChEBI" id="CHEBI:15378"/>
        <dbReference type="ChEBI" id="CHEBI:16526"/>
        <dbReference type="ChEBI" id="CHEBI:57453"/>
        <dbReference type="ChEBI" id="CHEBI:57783"/>
        <dbReference type="ChEBI" id="CHEBI:58349"/>
        <dbReference type="ChEBI" id="CHEBI:195366"/>
        <dbReference type="EC" id="1.5.1.6"/>
    </reaction>
    <physiologicalReaction direction="left-to-right" evidence="6">
        <dbReference type="Rhea" id="RHEA:10181"/>
    </physiologicalReaction>
</comment>
<comment type="subunit">
    <text evidence="2">Homotetramer.</text>
</comment>
<comment type="subcellular location">
    <subcellularLocation>
        <location evidence="2">Cytoplasm</location>
        <location evidence="2">Cytosol</location>
    </subcellularLocation>
</comment>
<comment type="tissue specificity">
    <text evidence="6">Highly expressed in liver (at protein level) (PubMed:31624291). Also expressed in pancreas, brain and lung (at protein level) (PubMed:31624291).</text>
</comment>
<comment type="domain">
    <text evidence="2">The N-terminal hydrolase domain has an NADP-independent formyltetrahydrofolate hydrolase activity, releasing formate and tetrahydrofolate.</text>
</comment>
<comment type="domain">
    <text evidence="2">The C-terminal aldehyde dehydrogenase domain has an NADP-dependent dehydrogenase activity. It catalyzes the oxidation of formate, released by the hydrolysis of formyltetrahydrofolate, into CO2.</text>
</comment>
<comment type="domain">
    <text evidence="2">The carrier domain is phosphopantetheinylated and uses the 4'-phosphopantetheine/4'-PP swinging arm to transfer the formyl group released by the N-terminal formyltetrahydrofolate hydrolase activity to the C-terminal aldehyde dehydrogenase domain that catalyzes its NADP-dependent oxidation into CO2. The overall NADP-dependent physiological reaction requires the 3 domains (N-terminal hydrolase, C-terminal aldehyde dehydrogenase and carrier domains) to convert formyltetrahydrofolate into tetrahydrofolate and CO2.</text>
</comment>
<comment type="PTM">
    <text evidence="2">Phosphopantetheinylation at Ser-354 by AASDHPPT is required for the formyltetrahydrofolate dehydrogenase activity.</text>
</comment>
<comment type="disruption phenotype">
    <text evidence="6">Homozygous knockout mice are viable, fertile, develop normally and do not display overt phenotype (PubMed:31624291). However, they have metabolic signs of folate deficiency like the accumulation of formiminoglutamate (PubMed:31624291). Mice show reduced hepatic folate pools with a strong accumulation of (6S)-10-formyltetrahydrofolate and a significant drop in tetrahydrofolate levels (PubMed:31624291). This is associated with a strong decrease of glycine levels as well as levels of several glycine conjugates (PubMed:31624291).</text>
</comment>
<comment type="similarity">
    <text evidence="8">In the N-terminal section; belongs to the GART family.</text>
</comment>
<comment type="similarity">
    <text evidence="8">In the C-terminal section; belongs to the aldehyde dehydrogenase family. ALDH1L subfamily.</text>
</comment>
<gene>
    <name evidence="10" type="primary">Aldh1l1</name>
    <name type="synonym">Fthfd</name>
</gene>
<accession>Q8R0Y6</accession>
<protein>
    <recommendedName>
        <fullName evidence="9">Cytosolic 10-formyltetrahydrofolate dehydrogenase</fullName>
        <shortName>10-FTHFDH</shortName>
        <shortName>FDH</shortName>
        <ecNumber evidence="6">1.5.1.6</ecNumber>
    </recommendedName>
    <alternativeName>
        <fullName evidence="7">Aldehyde dehydrogenase family 1 member L1</fullName>
    </alternativeName>
</protein>
<name>AL1L1_MOUSE</name>
<keyword id="KW-0007">Acetylation</keyword>
<keyword id="KW-0963">Cytoplasm</keyword>
<keyword id="KW-0521">NADP</keyword>
<keyword id="KW-0554">One-carbon metabolism</keyword>
<keyword id="KW-0560">Oxidoreductase</keyword>
<keyword id="KW-0596">Phosphopantetheine</keyword>
<keyword id="KW-0597">Phosphoprotein</keyword>
<keyword id="KW-1185">Reference proteome</keyword>
<reference key="1">
    <citation type="journal article" date="2004" name="Genome Res.">
        <title>The status, quality, and expansion of the NIH full-length cDNA project: the Mammalian Gene Collection (MGC).</title>
        <authorList>
            <consortium name="The MGC Project Team"/>
        </authorList>
    </citation>
    <scope>NUCLEOTIDE SEQUENCE [LARGE SCALE MRNA]</scope>
    <source>
        <strain>FVB/N</strain>
        <tissue>Liver</tissue>
    </source>
</reference>
<reference key="2">
    <citation type="journal article" date="2007" name="Proc. Natl. Acad. Sci. U.S.A.">
        <title>Large-scale phosphorylation analysis of mouse liver.</title>
        <authorList>
            <person name="Villen J."/>
            <person name="Beausoleil S.A."/>
            <person name="Gerber S.A."/>
            <person name="Gygi S.P."/>
        </authorList>
    </citation>
    <scope>IDENTIFICATION BY MASS SPECTROMETRY [LARGE SCALE ANALYSIS]</scope>
    <source>
        <tissue>Liver</tissue>
    </source>
</reference>
<reference key="3">
    <citation type="journal article" date="2010" name="Cell">
        <title>A tissue-specific atlas of mouse protein phosphorylation and expression.</title>
        <authorList>
            <person name="Huttlin E.L."/>
            <person name="Jedrychowski M.P."/>
            <person name="Elias J.E."/>
            <person name="Goswami T."/>
            <person name="Rad R."/>
            <person name="Beausoleil S.A."/>
            <person name="Villen J."/>
            <person name="Haas W."/>
            <person name="Sowa M.E."/>
            <person name="Gygi S.P."/>
        </authorList>
    </citation>
    <scope>IDENTIFICATION BY MASS SPECTROMETRY [LARGE SCALE ANALYSIS]</scope>
    <source>
        <tissue>Brain</tissue>
        <tissue>Brown adipose tissue</tissue>
        <tissue>Kidney</tissue>
        <tissue>Liver</tissue>
        <tissue>Lung</tissue>
        <tissue>Pancreas</tissue>
        <tissue>Spleen</tissue>
        <tissue>Testis</tissue>
    </source>
</reference>
<reference key="4">
    <citation type="journal article" date="2013" name="Mol. Cell">
        <title>SIRT5-mediated lysine desuccinylation impacts diverse metabolic pathways.</title>
        <authorList>
            <person name="Park J."/>
            <person name="Chen Y."/>
            <person name="Tishkoff D.X."/>
            <person name="Peng C."/>
            <person name="Tan M."/>
            <person name="Dai L."/>
            <person name="Xie Z."/>
            <person name="Zhang Y."/>
            <person name="Zwaans B.M."/>
            <person name="Skinner M.E."/>
            <person name="Lombard D.B."/>
            <person name="Zhao Y."/>
        </authorList>
    </citation>
    <scope>SUCCINYLATION [LARGE SCALE ANALYSIS] AT LYS-38 AND LYS-767</scope>
    <scope>IDENTIFICATION BY MASS SPECTROMETRY [LARGE SCALE ANALYSIS]</scope>
    <source>
        <tissue>Liver</tissue>
    </source>
</reference>
<reference key="5">
    <citation type="journal article" date="2019" name="Sci. Rep.">
        <title>Cytosolic 10-formyltetrahydrofolate dehydrogenase regulates glycine metabolism in mouse liver.</title>
        <authorList>
            <person name="Krupenko N.I."/>
            <person name="Sharma J."/>
            <person name="Pediaditakis P."/>
            <person name="Fekry B."/>
            <person name="Helke K.L."/>
            <person name="Du X."/>
            <person name="Sumner S."/>
            <person name="Krupenko S.A."/>
        </authorList>
    </citation>
    <scope>FUNCTION</scope>
    <scope>CATALYTIC ACTIVITY</scope>
    <scope>TISSUE SPECIFICITY</scope>
    <scope>DISRUPTION PHENOTYPE</scope>
</reference>
<dbReference type="EC" id="1.5.1.6" evidence="6"/>
<dbReference type="EMBL" id="BC025939">
    <property type="protein sequence ID" value="AAH25939.1"/>
    <property type="molecule type" value="mRNA"/>
</dbReference>
<dbReference type="EMBL" id="BC028817">
    <property type="protein sequence ID" value="AAH28817.1"/>
    <property type="molecule type" value="mRNA"/>
</dbReference>
<dbReference type="EMBL" id="BC030722">
    <property type="protein sequence ID" value="AAH30722.1"/>
    <property type="molecule type" value="mRNA"/>
</dbReference>
<dbReference type="EMBL" id="BC030723">
    <property type="protein sequence ID" value="AAH30723.1"/>
    <property type="molecule type" value="mRNA"/>
</dbReference>
<dbReference type="EMBL" id="BC030727">
    <property type="protein sequence ID" value="AAH30727.1"/>
    <property type="molecule type" value="mRNA"/>
</dbReference>
<dbReference type="EMBL" id="BC030730">
    <property type="protein sequence ID" value="AAH30730.1"/>
    <property type="molecule type" value="mRNA"/>
</dbReference>
<dbReference type="CCDS" id="CCDS20361.1"/>
<dbReference type="RefSeq" id="NP_001343341.1">
    <property type="nucleotide sequence ID" value="NM_001356412.1"/>
</dbReference>
<dbReference type="RefSeq" id="NP_081682.1">
    <property type="nucleotide sequence ID" value="NM_027406.2"/>
</dbReference>
<dbReference type="RefSeq" id="XP_006505342.1">
    <property type="nucleotide sequence ID" value="XM_006505279.3"/>
</dbReference>
<dbReference type="SMR" id="Q8R0Y6"/>
<dbReference type="BioGRID" id="223535">
    <property type="interactions" value="4"/>
</dbReference>
<dbReference type="FunCoup" id="Q8R0Y6">
    <property type="interactions" value="209"/>
</dbReference>
<dbReference type="IntAct" id="Q8R0Y6">
    <property type="interactions" value="3"/>
</dbReference>
<dbReference type="MINT" id="Q8R0Y6"/>
<dbReference type="STRING" id="10090.ENSMUSP00000114304"/>
<dbReference type="GlyGen" id="Q8R0Y6">
    <property type="glycosylation" value="2 sites, 1 N-linked glycan (1 site), 1 O-linked glycan (1 site)"/>
</dbReference>
<dbReference type="iPTMnet" id="Q8R0Y6"/>
<dbReference type="PhosphoSitePlus" id="Q8R0Y6"/>
<dbReference type="SwissPalm" id="Q8R0Y6"/>
<dbReference type="jPOST" id="Q8R0Y6"/>
<dbReference type="PaxDb" id="10090-ENSMUSP00000114304"/>
<dbReference type="PeptideAtlas" id="Q8R0Y6"/>
<dbReference type="ProteomicsDB" id="296091"/>
<dbReference type="ABCD" id="Q8R0Y6">
    <property type="antibodies" value="1 sequenced antibody"/>
</dbReference>
<dbReference type="Antibodypedia" id="33051">
    <property type="antibodies" value="589 antibodies from 36 providers"/>
</dbReference>
<dbReference type="DNASU" id="107747"/>
<dbReference type="Ensembl" id="ENSMUST00000032175.11">
    <property type="protein sequence ID" value="ENSMUSP00000032175.9"/>
    <property type="gene ID" value="ENSMUSG00000030088.16"/>
</dbReference>
<dbReference type="Ensembl" id="ENSMUST00000130418.8">
    <property type="protein sequence ID" value="ENSMUSP00000114304.2"/>
    <property type="gene ID" value="ENSMUSG00000030088.16"/>
</dbReference>
<dbReference type="GeneID" id="107747"/>
<dbReference type="KEGG" id="mmu:107747"/>
<dbReference type="UCSC" id="uc009cxl.1">
    <property type="organism name" value="mouse"/>
</dbReference>
<dbReference type="AGR" id="MGI:1340024"/>
<dbReference type="CTD" id="10840"/>
<dbReference type="MGI" id="MGI:1340024">
    <property type="gene designation" value="Aldh1l1"/>
</dbReference>
<dbReference type="VEuPathDB" id="HostDB:ENSMUSG00000030088"/>
<dbReference type="eggNOG" id="KOG2452">
    <property type="taxonomic scope" value="Eukaryota"/>
</dbReference>
<dbReference type="GeneTree" id="ENSGT00940000160913"/>
<dbReference type="HOGENOM" id="CLU_014974_0_0_1"/>
<dbReference type="InParanoid" id="Q8R0Y6"/>
<dbReference type="OMA" id="FENGVWG"/>
<dbReference type="PhylomeDB" id="Q8R0Y6"/>
<dbReference type="TreeFam" id="TF354242"/>
<dbReference type="Reactome" id="R-MMU-196757">
    <property type="pathway name" value="Metabolism of folate and pterines"/>
</dbReference>
<dbReference type="BioGRID-ORCS" id="107747">
    <property type="hits" value="2 hits in 78 CRISPR screens"/>
</dbReference>
<dbReference type="ChiTaRS" id="Aldh1l1">
    <property type="organism name" value="mouse"/>
</dbReference>
<dbReference type="PRO" id="PR:Q8R0Y6"/>
<dbReference type="Proteomes" id="UP000000589">
    <property type="component" value="Chromosome 6"/>
</dbReference>
<dbReference type="RNAct" id="Q8R0Y6">
    <property type="molecule type" value="protein"/>
</dbReference>
<dbReference type="Bgee" id="ENSMUSG00000030088">
    <property type="expression patterns" value="Expressed in left lobe of liver and 234 other cell types or tissues"/>
</dbReference>
<dbReference type="ExpressionAtlas" id="Q8R0Y6">
    <property type="expression patterns" value="baseline and differential"/>
</dbReference>
<dbReference type="GO" id="GO:0005829">
    <property type="term" value="C:cytosol"/>
    <property type="evidence" value="ECO:0000314"/>
    <property type="project" value="MGI"/>
</dbReference>
<dbReference type="GO" id="GO:0005739">
    <property type="term" value="C:mitochondrion"/>
    <property type="evidence" value="ECO:0007005"/>
    <property type="project" value="MGI"/>
</dbReference>
<dbReference type="GO" id="GO:0004029">
    <property type="term" value="F:aldehyde dehydrogenase (NAD+) activity"/>
    <property type="evidence" value="ECO:0000315"/>
    <property type="project" value="MGI"/>
</dbReference>
<dbReference type="GO" id="GO:0016155">
    <property type="term" value="F:formyltetrahydrofolate dehydrogenase activity"/>
    <property type="evidence" value="ECO:0000315"/>
    <property type="project" value="UniProtKB"/>
</dbReference>
<dbReference type="GO" id="GO:0009258">
    <property type="term" value="P:10-formyltetrahydrofolate catabolic process"/>
    <property type="evidence" value="ECO:0000315"/>
    <property type="project" value="UniProtKB"/>
</dbReference>
<dbReference type="GO" id="GO:0009058">
    <property type="term" value="P:biosynthetic process"/>
    <property type="evidence" value="ECO:0007669"/>
    <property type="project" value="InterPro"/>
</dbReference>
<dbReference type="GO" id="GO:0006740">
    <property type="term" value="P:NADPH regeneration"/>
    <property type="evidence" value="ECO:0000250"/>
    <property type="project" value="UniProtKB"/>
</dbReference>
<dbReference type="GO" id="GO:0035999">
    <property type="term" value="P:tetrahydrofolate interconversion"/>
    <property type="evidence" value="ECO:0000315"/>
    <property type="project" value="MGI"/>
</dbReference>
<dbReference type="CDD" id="cd07140">
    <property type="entry name" value="ALDH_F1L_FTFDH"/>
    <property type="match status" value="1"/>
</dbReference>
<dbReference type="CDD" id="cd08703">
    <property type="entry name" value="FDH_Hydrolase_C"/>
    <property type="match status" value="1"/>
</dbReference>
<dbReference type="CDD" id="cd08647">
    <property type="entry name" value="FMT_core_FDH_N"/>
    <property type="match status" value="1"/>
</dbReference>
<dbReference type="FunFam" id="1.10.1200.10:FF:000002">
    <property type="entry name" value="10-formyltetrahydrofolate dehydrogenase"/>
    <property type="match status" value="1"/>
</dbReference>
<dbReference type="FunFam" id="3.10.25.10:FF:000002">
    <property type="entry name" value="10-formyltetrahydrofolate dehydrogenase"/>
    <property type="match status" value="1"/>
</dbReference>
<dbReference type="FunFam" id="3.40.50.170:FF:000002">
    <property type="entry name" value="10-formyltetrahydrofolate dehydrogenase"/>
    <property type="match status" value="1"/>
</dbReference>
<dbReference type="FunFam" id="3.40.605.10:FF:000026">
    <property type="entry name" value="Aldehyde dehydrogenase, putative"/>
    <property type="match status" value="1"/>
</dbReference>
<dbReference type="FunFam" id="3.40.309.10:FF:000008">
    <property type="entry name" value="Cytosolic 10-formyltetrahydrofolate dehydrogenase"/>
    <property type="match status" value="1"/>
</dbReference>
<dbReference type="FunFam" id="3.40.605.10:FF:000009">
    <property type="entry name" value="Cytosolic 10-formyltetrahydrofolate dehydrogenase"/>
    <property type="match status" value="1"/>
</dbReference>
<dbReference type="Gene3D" id="1.10.1200.10">
    <property type="entry name" value="ACP-like"/>
    <property type="match status" value="1"/>
</dbReference>
<dbReference type="Gene3D" id="3.40.605.10">
    <property type="entry name" value="Aldehyde Dehydrogenase, Chain A, domain 1"/>
    <property type="match status" value="1"/>
</dbReference>
<dbReference type="Gene3D" id="3.40.309.10">
    <property type="entry name" value="Aldehyde Dehydrogenase, Chain A, domain 2"/>
    <property type="match status" value="1"/>
</dbReference>
<dbReference type="Gene3D" id="3.10.25.10">
    <property type="entry name" value="Formyl transferase, C-terminal domain"/>
    <property type="match status" value="1"/>
</dbReference>
<dbReference type="Gene3D" id="3.40.50.170">
    <property type="entry name" value="Formyl transferase, N-terminal domain"/>
    <property type="match status" value="1"/>
</dbReference>
<dbReference type="InterPro" id="IPR011407">
    <property type="entry name" value="10_FTHF_DH"/>
</dbReference>
<dbReference type="InterPro" id="IPR036736">
    <property type="entry name" value="ACP-like_sf"/>
</dbReference>
<dbReference type="InterPro" id="IPR016161">
    <property type="entry name" value="Ald_DH/histidinol_DH"/>
</dbReference>
<dbReference type="InterPro" id="IPR016163">
    <property type="entry name" value="Ald_DH_C"/>
</dbReference>
<dbReference type="InterPro" id="IPR016160">
    <property type="entry name" value="Ald_DH_CS_CYS"/>
</dbReference>
<dbReference type="InterPro" id="IPR029510">
    <property type="entry name" value="Ald_DH_CS_GLU"/>
</dbReference>
<dbReference type="InterPro" id="IPR016162">
    <property type="entry name" value="Ald_DH_N"/>
</dbReference>
<dbReference type="InterPro" id="IPR015590">
    <property type="entry name" value="Aldehyde_DH_dom"/>
</dbReference>
<dbReference type="InterPro" id="IPR005793">
    <property type="entry name" value="Formyl_trans_C"/>
</dbReference>
<dbReference type="InterPro" id="IPR037022">
    <property type="entry name" value="Formyl_trans_C_sf"/>
</dbReference>
<dbReference type="InterPro" id="IPR002376">
    <property type="entry name" value="Formyl_transf_N"/>
</dbReference>
<dbReference type="InterPro" id="IPR036477">
    <property type="entry name" value="Formyl_transf_N_sf"/>
</dbReference>
<dbReference type="InterPro" id="IPR011034">
    <property type="entry name" value="Formyl_transferase-like_C_sf"/>
</dbReference>
<dbReference type="InterPro" id="IPR001555">
    <property type="entry name" value="GART_AS"/>
</dbReference>
<dbReference type="InterPro" id="IPR009081">
    <property type="entry name" value="PP-bd_ACP"/>
</dbReference>
<dbReference type="PANTHER" id="PTHR11699">
    <property type="entry name" value="ALDEHYDE DEHYDROGENASE-RELATED"/>
    <property type="match status" value="1"/>
</dbReference>
<dbReference type="Pfam" id="PF00171">
    <property type="entry name" value="Aldedh"/>
    <property type="match status" value="1"/>
</dbReference>
<dbReference type="Pfam" id="PF02911">
    <property type="entry name" value="Formyl_trans_C"/>
    <property type="match status" value="1"/>
</dbReference>
<dbReference type="Pfam" id="PF00551">
    <property type="entry name" value="Formyl_trans_N"/>
    <property type="match status" value="1"/>
</dbReference>
<dbReference type="PIRSF" id="PIRSF036489">
    <property type="entry name" value="10-FTHFDH"/>
    <property type="match status" value="1"/>
</dbReference>
<dbReference type="SUPFAM" id="SSF47336">
    <property type="entry name" value="ACP-like"/>
    <property type="match status" value="1"/>
</dbReference>
<dbReference type="SUPFAM" id="SSF53720">
    <property type="entry name" value="ALDH-like"/>
    <property type="match status" value="1"/>
</dbReference>
<dbReference type="SUPFAM" id="SSF50486">
    <property type="entry name" value="FMT C-terminal domain-like"/>
    <property type="match status" value="1"/>
</dbReference>
<dbReference type="SUPFAM" id="SSF53328">
    <property type="entry name" value="Formyltransferase"/>
    <property type="match status" value="1"/>
</dbReference>
<dbReference type="PROSITE" id="PS00070">
    <property type="entry name" value="ALDEHYDE_DEHYDR_CYS"/>
    <property type="match status" value="1"/>
</dbReference>
<dbReference type="PROSITE" id="PS00687">
    <property type="entry name" value="ALDEHYDE_DEHYDR_GLU"/>
    <property type="match status" value="1"/>
</dbReference>
<dbReference type="PROSITE" id="PS50075">
    <property type="entry name" value="CARRIER"/>
    <property type="match status" value="1"/>
</dbReference>
<dbReference type="PROSITE" id="PS00373">
    <property type="entry name" value="GART"/>
    <property type="match status" value="1"/>
</dbReference>